<protein>
    <recommendedName>
        <fullName evidence="1">Putative endonuclease</fullName>
        <ecNumber evidence="4">3.1.-.-</ecNumber>
    </recommendedName>
</protein>
<proteinExistence type="evidence at transcript level"/>
<keyword id="KW-0238">DNA-binding</keyword>
<keyword id="KW-0255">Endonuclease</keyword>
<keyword id="KW-0378">Hydrolase</keyword>
<keyword id="KW-0426">Late protein</keyword>
<keyword id="KW-0540">Nuclease</keyword>
<keyword id="KW-1185">Reference proteome</keyword>
<evidence type="ECO:0000303" key="1">
    <source>
    </source>
</evidence>
<evidence type="ECO:0000305" key="2"/>
<evidence type="ECO:0000305" key="3">
    <source>
    </source>
</evidence>
<evidence type="ECO:0000305" key="4">
    <source>
    </source>
</evidence>
<evidence type="ECO:0000312" key="5">
    <source>
        <dbReference type="EMBL" id="AAS77193.1"/>
    </source>
</evidence>
<evidence type="ECO:0000312" key="6">
    <source>
        <dbReference type="EMBL" id="AAU05289.1"/>
    </source>
</evidence>
<evidence type="ECO:0000312" key="7">
    <source>
        <dbReference type="EMBL" id="AAX12080.1"/>
    </source>
</evidence>
<reference key="1">
    <citation type="submission" date="2004-01" db="EMBL/GenBank/DDBJ databases">
        <title>Bacteriophage T5 complete genome.</title>
        <authorList>
            <person name="Ksenzenko V.N."/>
            <person name="Kaliman A.V."/>
            <person name="Krutilina A.I."/>
            <person name="Shlyapnikov M.G."/>
        </authorList>
    </citation>
    <scope>NUCLEOTIDE SEQUENCE [LARGE SCALE GENOMIC DNA]</scope>
</reference>
<reference key="2">
    <citation type="journal article" date="2005" name="Virology">
        <title>Complete genome sequence of bacteriophage T5.</title>
        <authorList>
            <person name="Wang J."/>
            <person name="Jiang Y."/>
            <person name="Vincent M."/>
            <person name="Sun Y."/>
            <person name="Yu H."/>
            <person name="Wang J."/>
            <person name="Bao Q."/>
            <person name="Kong H."/>
            <person name="Hu S."/>
        </authorList>
    </citation>
    <scope>NUCLEOTIDE SEQUENCE [LARGE SCALE GENOMIC DNA]</scope>
    <scope>INDUCTION</scope>
    <source>
        <strain evidence="7">ATCC 11303-B5</strain>
    </source>
</reference>
<reference key="3">
    <citation type="journal article" date="2014" name="J. Virol.">
        <title>Insights into bacteriophage T5 structure from analysis of its morphogenesis genes and protein components.</title>
        <authorList>
            <person name="Zivanovic Y."/>
            <person name="Confalonieri F."/>
            <person name="Ponchon L."/>
            <person name="Lurz R."/>
            <person name="Chami M."/>
            <person name="Flayhan A."/>
            <person name="Renouard M."/>
            <person name="Huet A."/>
            <person name="Decottignies P."/>
            <person name="Davidson A.R."/>
            <person name="Breyton C."/>
            <person name="Boulanger P."/>
        </authorList>
    </citation>
    <scope>NUCLEOTIDE SEQUENCE [LARGE SCALE GENOMIC DNA]</scope>
    <scope>FUNCTION</scope>
    <source>
        <strain>St0 deletion mutant</strain>
    </source>
</reference>
<feature type="chain" id="PRO_0000435552" description="Putative endonuclease">
    <location>
        <begin position="1"/>
        <end position="277"/>
    </location>
</feature>
<name>ENDO1_BPT5</name>
<dbReference type="EC" id="3.1.-.-" evidence="4"/>
<dbReference type="EMBL" id="AY543070">
    <property type="protein sequence ID" value="AAS77193.1"/>
    <property type="molecule type" value="Genomic_DNA"/>
</dbReference>
<dbReference type="EMBL" id="AY692264">
    <property type="protein sequence ID" value="AAU05289.1"/>
    <property type="molecule type" value="Genomic_DNA"/>
</dbReference>
<dbReference type="EMBL" id="AY587007">
    <property type="protein sequence ID" value="AAX12080.1"/>
    <property type="status" value="ALT_INIT"/>
    <property type="molecule type" value="Genomic_DNA"/>
</dbReference>
<dbReference type="RefSeq" id="YP_006982.1">
    <property type="nucleotide sequence ID" value="NC_005859.1"/>
</dbReference>
<dbReference type="GeneID" id="2777678"/>
<dbReference type="KEGG" id="vg:2777678"/>
<dbReference type="Proteomes" id="UP000002107">
    <property type="component" value="Genome"/>
</dbReference>
<dbReference type="Proteomes" id="UP000002141">
    <property type="component" value="Segment"/>
</dbReference>
<dbReference type="Proteomes" id="UP000002503">
    <property type="component" value="Segment"/>
</dbReference>
<dbReference type="GO" id="GO:0003677">
    <property type="term" value="F:DNA binding"/>
    <property type="evidence" value="ECO:0007669"/>
    <property type="project" value="UniProtKB-KW"/>
</dbReference>
<dbReference type="GO" id="GO:0004519">
    <property type="term" value="F:endonuclease activity"/>
    <property type="evidence" value="ECO:0007669"/>
    <property type="project" value="UniProtKB-KW"/>
</dbReference>
<dbReference type="Pfam" id="PF13455">
    <property type="entry name" value="MUG113"/>
    <property type="match status" value="1"/>
</dbReference>
<accession>Q6QGD3</accession>
<accession>Q5DMF1</accession>
<gene>
    <name evidence="5" type="ORF">T5.154</name>
    <name evidence="6" type="ORF">T5p150</name>
</gene>
<comment type="function">
    <text evidence="4">Putative endonuclease.</text>
</comment>
<comment type="induction">
    <text evidence="3">Expressed in the late phase of the viral replicative cycle.</text>
</comment>
<comment type="sequence caution" evidence="2">
    <conflict type="erroneous initiation">
        <sequence resource="EMBL-CDS" id="AAX12080"/>
    </conflict>
    <text>Truncated N-terminus.</text>
</comment>
<organismHost>
    <name type="scientific">Escherichia coli</name>
    <dbReference type="NCBI Taxonomy" id="562"/>
</organismHost>
<organism>
    <name type="scientific">Escherichia phage T5</name>
    <name type="common">Enterobacteria phage T5</name>
    <dbReference type="NCBI Taxonomy" id="2695836"/>
    <lineage>
        <taxon>Viruses</taxon>
        <taxon>Duplodnaviria</taxon>
        <taxon>Heunggongvirae</taxon>
        <taxon>Uroviricota</taxon>
        <taxon>Caudoviricetes</taxon>
        <taxon>Demerecviridae</taxon>
        <taxon>Markadamsvirinae</taxon>
        <taxon>Tequintavirus</taxon>
        <taxon>Tequintavirus T5</taxon>
    </lineage>
</organism>
<sequence>MGYYSVGIPFLYFKIPFTNSIRLCILYSLIGRTSPIIERKQEKLMLYMGVGDSMGRQKLTIKDINIRLADRGIQIVGEYVNQRTKTVFKCQRAHVWEATPHSILHMRRGCPHCSNNTISLDEVSNRISNIGYTLLSSYTNAKTKLHLRCNNGHDCFITLDGLTQGKRCPYCSLKWENGGFLYIMSFSSGTKVGISLYPEKRLNEVKRESGFSDLYLFTMYHLPDRETALDLEKEVHREYYNKNCGFSNFTGSTEFFNVAPEDIVIFLNSFGLEEYGH</sequence>